<organism>
    <name type="scientific">Schizosaccharomyces pombe (strain 972 / ATCC 24843)</name>
    <name type="common">Fission yeast</name>
    <dbReference type="NCBI Taxonomy" id="284812"/>
    <lineage>
        <taxon>Eukaryota</taxon>
        <taxon>Fungi</taxon>
        <taxon>Dikarya</taxon>
        <taxon>Ascomycota</taxon>
        <taxon>Taphrinomycotina</taxon>
        <taxon>Schizosaccharomycetes</taxon>
        <taxon>Schizosaccharomycetales</taxon>
        <taxon>Schizosaccharomycetaceae</taxon>
        <taxon>Schizosaccharomyces</taxon>
    </lineage>
</organism>
<feature type="chain" id="PRO_0000314092" description="Phosphatidylinositol 4-kinase stt4">
    <location>
        <begin position="1"/>
        <end position="1877"/>
    </location>
</feature>
<feature type="domain" description="PIK helical" evidence="3">
    <location>
        <begin position="1305"/>
        <end position="1491"/>
    </location>
</feature>
<feature type="domain" description="PI3K/PI4K catalytic" evidence="2">
    <location>
        <begin position="1593"/>
        <end position="1861"/>
    </location>
</feature>
<feature type="region of interest" description="Pleckstrin homology (PH) domain conferring phosphoinositide binding specificity" evidence="1">
    <location>
        <begin position="1492"/>
        <end position="1625"/>
    </location>
</feature>
<feature type="region of interest" description="G-loop" evidence="2">
    <location>
        <begin position="1599"/>
        <end position="1605"/>
    </location>
</feature>
<feature type="region of interest" description="Catalytic loop" evidence="2">
    <location>
        <begin position="1728"/>
        <end position="1736"/>
    </location>
</feature>
<feature type="region of interest" description="Activation loop" evidence="2">
    <location>
        <begin position="1747"/>
        <end position="1771"/>
    </location>
</feature>
<evidence type="ECO:0000250" key="1"/>
<evidence type="ECO:0000255" key="2">
    <source>
        <dbReference type="PROSITE-ProRule" id="PRU00269"/>
    </source>
</evidence>
<evidence type="ECO:0000255" key="3">
    <source>
        <dbReference type="PROSITE-ProRule" id="PRU00878"/>
    </source>
</evidence>
<evidence type="ECO:0000269" key="4">
    <source>
    </source>
</evidence>
<evidence type="ECO:0000305" key="5"/>
<accession>Q9USR3</accession>
<dbReference type="EC" id="2.7.1.67"/>
<dbReference type="EMBL" id="CU329671">
    <property type="protein sequence ID" value="CAB54814.1"/>
    <property type="molecule type" value="Genomic_DNA"/>
</dbReference>
<dbReference type="PIR" id="T40550">
    <property type="entry name" value="T40550"/>
</dbReference>
<dbReference type="RefSeq" id="NP_595304.1">
    <property type="nucleotide sequence ID" value="NM_001021211.2"/>
</dbReference>
<dbReference type="SMR" id="Q9USR3"/>
<dbReference type="BioGRID" id="277400">
    <property type="interactions" value="11"/>
</dbReference>
<dbReference type="FunCoup" id="Q9USR3">
    <property type="interactions" value="286"/>
</dbReference>
<dbReference type="STRING" id="284812.Q9USR3"/>
<dbReference type="iPTMnet" id="Q9USR3"/>
<dbReference type="PaxDb" id="4896-SPBC577.06c.1"/>
<dbReference type="EnsemblFungi" id="SPBC577.06c.1">
    <property type="protein sequence ID" value="SPBC577.06c.1:pep"/>
    <property type="gene ID" value="SPBC577.06c"/>
</dbReference>
<dbReference type="GeneID" id="2540883"/>
<dbReference type="KEGG" id="spo:2540883"/>
<dbReference type="PomBase" id="SPBC577.06c">
    <property type="gene designation" value="stt4"/>
</dbReference>
<dbReference type="VEuPathDB" id="FungiDB:SPBC577.06c"/>
<dbReference type="eggNOG" id="KOG0902">
    <property type="taxonomic scope" value="Eukaryota"/>
</dbReference>
<dbReference type="HOGENOM" id="CLU_000893_3_0_1"/>
<dbReference type="InParanoid" id="Q9USR3"/>
<dbReference type="OMA" id="MKANFFV"/>
<dbReference type="PhylomeDB" id="Q9USR3"/>
<dbReference type="Reactome" id="R-SPO-1483248">
    <property type="pathway name" value="Synthesis of PIPs at the ER membrane"/>
</dbReference>
<dbReference type="Reactome" id="R-SPO-1660514">
    <property type="pathway name" value="Synthesis of PIPs at the Golgi membrane"/>
</dbReference>
<dbReference type="PRO" id="PR:Q9USR3"/>
<dbReference type="Proteomes" id="UP000002485">
    <property type="component" value="Chromosome II"/>
</dbReference>
<dbReference type="GO" id="GO:0005737">
    <property type="term" value="C:cytoplasm"/>
    <property type="evidence" value="ECO:0000318"/>
    <property type="project" value="GO_Central"/>
</dbReference>
<dbReference type="GO" id="GO:0005739">
    <property type="term" value="C:mitochondrion"/>
    <property type="evidence" value="ECO:0000266"/>
    <property type="project" value="PomBase"/>
</dbReference>
<dbReference type="GO" id="GO:0005886">
    <property type="term" value="C:plasma membrane"/>
    <property type="evidence" value="ECO:0000314"/>
    <property type="project" value="PomBase"/>
</dbReference>
<dbReference type="GO" id="GO:0004430">
    <property type="term" value="F:1-phosphatidylinositol 4-kinase activity"/>
    <property type="evidence" value="ECO:0000318"/>
    <property type="project" value="GO_Central"/>
</dbReference>
<dbReference type="GO" id="GO:0005524">
    <property type="term" value="F:ATP binding"/>
    <property type="evidence" value="ECO:0007669"/>
    <property type="project" value="UniProtKB-KW"/>
</dbReference>
<dbReference type="GO" id="GO:0180048">
    <property type="term" value="P:phosphatidylinositol 4-phosphate biosynthetic process"/>
    <property type="evidence" value="ECO:0000269"/>
    <property type="project" value="PomBase"/>
</dbReference>
<dbReference type="GO" id="GO:0046854">
    <property type="term" value="P:phosphatidylinositol phosphate biosynthetic process"/>
    <property type="evidence" value="ECO:0000266"/>
    <property type="project" value="PomBase"/>
</dbReference>
<dbReference type="GO" id="GO:0048015">
    <property type="term" value="P:phosphatidylinositol-mediated signaling"/>
    <property type="evidence" value="ECO:0000318"/>
    <property type="project" value="GO_Central"/>
</dbReference>
<dbReference type="CDD" id="cd00871">
    <property type="entry name" value="PI4Ka"/>
    <property type="match status" value="1"/>
</dbReference>
<dbReference type="CDD" id="cd05167">
    <property type="entry name" value="PI4Kc_III_alpha"/>
    <property type="match status" value="1"/>
</dbReference>
<dbReference type="FunFam" id="1.25.40.70:FF:000011">
    <property type="entry name" value="Phosphatidylinositol 4-kinase alpha"/>
    <property type="match status" value="1"/>
</dbReference>
<dbReference type="FunFam" id="3.30.1010.10:FF:000014">
    <property type="entry name" value="Phosphatidylinositol 4-kinase STT4"/>
    <property type="match status" value="1"/>
</dbReference>
<dbReference type="FunFam" id="1.10.1070.11:FF:000022">
    <property type="entry name" value="Phosphatidylinositol 4-kinase stt4"/>
    <property type="match status" value="1"/>
</dbReference>
<dbReference type="Gene3D" id="1.10.1070.11">
    <property type="entry name" value="Phosphatidylinositol 3-/4-kinase, catalytic domain"/>
    <property type="match status" value="1"/>
</dbReference>
<dbReference type="Gene3D" id="3.30.1010.10">
    <property type="entry name" value="Phosphatidylinositol 3-kinase Catalytic Subunit, Chain A, domain 4"/>
    <property type="match status" value="1"/>
</dbReference>
<dbReference type="Gene3D" id="1.25.40.70">
    <property type="entry name" value="Phosphatidylinositol 3-kinase, accessory domain (PIK)"/>
    <property type="match status" value="1"/>
</dbReference>
<dbReference type="InterPro" id="IPR016024">
    <property type="entry name" value="ARM-type_fold"/>
</dbReference>
<dbReference type="InterPro" id="IPR011009">
    <property type="entry name" value="Kinase-like_dom_sf"/>
</dbReference>
<dbReference type="InterPro" id="IPR000403">
    <property type="entry name" value="PI3/4_kinase_cat_dom"/>
</dbReference>
<dbReference type="InterPro" id="IPR036940">
    <property type="entry name" value="PI3/4_kinase_cat_sf"/>
</dbReference>
<dbReference type="InterPro" id="IPR018936">
    <property type="entry name" value="PI3/4_kinase_CS"/>
</dbReference>
<dbReference type="InterPro" id="IPR001263">
    <property type="entry name" value="PI3K_accessory_dom"/>
</dbReference>
<dbReference type="InterPro" id="IPR042236">
    <property type="entry name" value="PI3K_accessory_sf"/>
</dbReference>
<dbReference type="InterPro" id="IPR045495">
    <property type="entry name" value="PI4K_N"/>
</dbReference>
<dbReference type="InterPro" id="IPR015433">
    <property type="entry name" value="PI_Kinase"/>
</dbReference>
<dbReference type="PANTHER" id="PTHR10048:SF15">
    <property type="entry name" value="PHOSPHATIDYLINOSITOL 4-KINASE ALPHA"/>
    <property type="match status" value="1"/>
</dbReference>
<dbReference type="PANTHER" id="PTHR10048">
    <property type="entry name" value="PHOSPHATIDYLINOSITOL KINASE"/>
    <property type="match status" value="1"/>
</dbReference>
<dbReference type="Pfam" id="PF00454">
    <property type="entry name" value="PI3_PI4_kinase"/>
    <property type="match status" value="1"/>
</dbReference>
<dbReference type="Pfam" id="PF00613">
    <property type="entry name" value="PI3Ka"/>
    <property type="match status" value="1"/>
</dbReference>
<dbReference type="Pfam" id="PF19274">
    <property type="entry name" value="PI4K_N"/>
    <property type="match status" value="1"/>
</dbReference>
<dbReference type="SMART" id="SM00145">
    <property type="entry name" value="PI3Ka"/>
    <property type="match status" value="1"/>
</dbReference>
<dbReference type="SMART" id="SM00146">
    <property type="entry name" value="PI3Kc"/>
    <property type="match status" value="1"/>
</dbReference>
<dbReference type="SUPFAM" id="SSF48371">
    <property type="entry name" value="ARM repeat"/>
    <property type="match status" value="1"/>
</dbReference>
<dbReference type="SUPFAM" id="SSF56112">
    <property type="entry name" value="Protein kinase-like (PK-like)"/>
    <property type="match status" value="1"/>
</dbReference>
<dbReference type="PROSITE" id="PS00915">
    <property type="entry name" value="PI3_4_KINASE_1"/>
    <property type="match status" value="1"/>
</dbReference>
<dbReference type="PROSITE" id="PS00916">
    <property type="entry name" value="PI3_4_KINASE_2"/>
    <property type="match status" value="1"/>
</dbReference>
<dbReference type="PROSITE" id="PS50290">
    <property type="entry name" value="PI3_4_KINASE_3"/>
    <property type="match status" value="1"/>
</dbReference>
<dbReference type="PROSITE" id="PS51545">
    <property type="entry name" value="PIK_HELICAL"/>
    <property type="match status" value="1"/>
</dbReference>
<proteinExistence type="inferred from homology"/>
<sequence length="1877" mass="213963">MDCIDKSIRRESLRKLGCLPDHGWNLFVQSSNRYSKLLEADSKLFKAQRIEDTVLSICEVTLENKASENALTLFQQLRFYLLNYLFLEDTSEYKSVLCSLDESVYPNLLPLTANICPCILKALLALVRQHRELSSDIVKFLNSIFLALTRILNTPHSSNNNPTHTKTTIFEKVFYASHLGFFFEEIADACISALPQDACLWAMEVCNTILVSDLPCKLIDLHNDSFLHHSNYYAGFGLSYYLYLSSMKAYINSSGCLWYEDATSFWDIVKHRPSSPEEKPFLTQFQSILNLSDKFLSKTGTLRLQEKLGTSCNLFFVLVLKLALLSSSYIGFVPYTYSDWINVLLGSISEDPELLPHLIELMASLACVFPTHFQFAMKRLRLIAIYAPRFDDGNVTYAQLASRKLAQLFNYSSRDTAITSIYQFANLLSPADTPDSYLAAPKERLSISDNMSSSSSQTATVNTISNYLNVIDSVREIALTVNDEKIYGLAISLLIQKFSRKFDSRVSTELVRTLADISTKANDRDFSILVQFYSIQNKMLVKNGDEALTIAICDSRCLIARGTESNSFKRSDLLKSLLEEIIHIGIVRDTPAPELKGYYFGMSKAVQALVECVAGTDWSSLPKEEMYPALFRDMWFTLVINRFRYSVDLGETLEVDLENIAKNSPLLVFEDFGSNFESNLELNTVLRTHIEHSVISQIKSELLVRVPNIDLKPLSTSEICFLSAVLLLESLRCKSNKLSALVEYLLDPSLRDSQLPQSIRAIALYNLTSFVESLSKERRVASSTIDEFQKLLCLCCNRVDCVRQLALECMNYIMETLPHLLGIKEILFSVLELSSLLWKARTEECTDQYVPQLLYKSNKLNLSVILSDIYSCREEVLFQFNRHARSWIQNSSKAIPYQVKNLLESYLADFVDFDDLEVVELGRSLAVELGTRIVSSDRDNFVLPAFGNWTPDTSSEFMAEYTIRQRYSHVDNSILNIEGDMSTDRIDLILNEKSKLFETHLAALKSLEDDILQGNTVSPQRLRNEVRKAAAHAVQEPIFQFSVLARKIVRIPFLDFSPSSFKLGITLWNWMMNQVPSFSSFLISNIIRNWKNEIVTEKRGYFSTAKSKSPLALPMTYSPTERASFLSYKNKVMSQMIPHLLLLQLIAGNFEGFWYGDRQTAKLIVHFMKFVLKKITSMEVNLNVLTRELHFKFVSFGLRIAENLLNSPLGSRFYNLCVDAGLCWFSGMPNWTYGADKLHVAAEISVMRSLRDKLDSFLLRYPLKVSTTLKQKLLIILLNNEMYMLYTWLTPVLHGRNVRMVEPIPDSDAASSPITLEMLQVAWNVSPNIVLYAPKRFQNAPLKQMALNFVIANPFTSVKHEVALEYLFEHYPSGEFPIDRKFILYWEPMYPVSGPVMFMPNVKWNPQLLQYTMRSMESYPVSVTFFYVPQIVQSLRYDSMGYAESFILETSGTSQLFAHQILWNMKANLYKDEAATVPDSIKPILDRVMDKMINSLSGEDKQFYEREFTFFNEVTSISGKLKPFIRKSKPEKKAKIDEEMKKIKLDVGVYLPSNPDGVIVGIDRKSGKPLQSHAKAPFMATFKIRKEKLVDADPEELAVNGTEEEAGDSAKKQTYEVWQSAIFKVGDDCRQDVLTLQLIAMFKNIFNSVGLDVYLFPYRVTATNPGCGVIDVLPNCISRDMLGREAVNGLYDYFRTKFGDEDSIAFQKARSNFVQSMAAYSVITYLLQFKDRHNGNIMIDDQGHILHIDFGFIFDIAPGGITFESAPFKLTTEMIAVMGGSNKSQPFQWFQELCVKAFLACRPYAHYICQAVEVMLDSGLPCFKGQLTITHCLERFALNLNERQASTFMLHLIEQSYANKRTLMYDQFQKATNGIPY</sequence>
<gene>
    <name type="primary">stt4</name>
    <name type="ORF">SPBC577.06c</name>
</gene>
<comment type="function">
    <text evidence="1">Acts on phosphatidylinositol (PI) in the first committed step in the production of the second messenger inositol 1,4,5,-trisphosphate.</text>
</comment>
<comment type="catalytic activity">
    <reaction>
        <text>a 1,2-diacyl-sn-glycero-3-phospho-(1D-myo-inositol) + ATP = a 1,2-diacyl-sn-glycero-3-phospho-(1D-myo-inositol 4-phosphate) + ADP + H(+)</text>
        <dbReference type="Rhea" id="RHEA:19877"/>
        <dbReference type="ChEBI" id="CHEBI:15378"/>
        <dbReference type="ChEBI" id="CHEBI:30616"/>
        <dbReference type="ChEBI" id="CHEBI:57880"/>
        <dbReference type="ChEBI" id="CHEBI:58178"/>
        <dbReference type="ChEBI" id="CHEBI:456216"/>
        <dbReference type="EC" id="2.7.1.67"/>
    </reaction>
</comment>
<comment type="subcellular location">
    <subcellularLocation>
        <location evidence="4">Cytoplasm</location>
    </subcellularLocation>
</comment>
<comment type="similarity">
    <text evidence="5">Belongs to the PI3/PI4-kinase family. Type III PI4K subfamily.</text>
</comment>
<keyword id="KW-0067">ATP-binding</keyword>
<keyword id="KW-0963">Cytoplasm</keyword>
<keyword id="KW-0418">Kinase</keyword>
<keyword id="KW-0547">Nucleotide-binding</keyword>
<keyword id="KW-1185">Reference proteome</keyword>
<keyword id="KW-0808">Transferase</keyword>
<protein>
    <recommendedName>
        <fullName>Phosphatidylinositol 4-kinase stt4</fullName>
        <shortName>PI4-kinase</shortName>
        <shortName>PtdIns-4-kinase</shortName>
        <ecNumber>2.7.1.67</ecNumber>
    </recommendedName>
</protein>
<reference key="1">
    <citation type="journal article" date="2002" name="Nature">
        <title>The genome sequence of Schizosaccharomyces pombe.</title>
        <authorList>
            <person name="Wood V."/>
            <person name="Gwilliam R."/>
            <person name="Rajandream M.A."/>
            <person name="Lyne M.H."/>
            <person name="Lyne R."/>
            <person name="Stewart A."/>
            <person name="Sgouros J.G."/>
            <person name="Peat N."/>
            <person name="Hayles J."/>
            <person name="Baker S.G."/>
            <person name="Basham D."/>
            <person name="Bowman S."/>
            <person name="Brooks K."/>
            <person name="Brown D."/>
            <person name="Brown S."/>
            <person name="Chillingworth T."/>
            <person name="Churcher C.M."/>
            <person name="Collins M."/>
            <person name="Connor R."/>
            <person name="Cronin A."/>
            <person name="Davis P."/>
            <person name="Feltwell T."/>
            <person name="Fraser A."/>
            <person name="Gentles S."/>
            <person name="Goble A."/>
            <person name="Hamlin N."/>
            <person name="Harris D.E."/>
            <person name="Hidalgo J."/>
            <person name="Hodgson G."/>
            <person name="Holroyd S."/>
            <person name="Hornsby T."/>
            <person name="Howarth S."/>
            <person name="Huckle E.J."/>
            <person name="Hunt S."/>
            <person name="Jagels K."/>
            <person name="James K.D."/>
            <person name="Jones L."/>
            <person name="Jones M."/>
            <person name="Leather S."/>
            <person name="McDonald S."/>
            <person name="McLean J."/>
            <person name="Mooney P."/>
            <person name="Moule S."/>
            <person name="Mungall K.L."/>
            <person name="Murphy L.D."/>
            <person name="Niblett D."/>
            <person name="Odell C."/>
            <person name="Oliver K."/>
            <person name="O'Neil S."/>
            <person name="Pearson D."/>
            <person name="Quail M.A."/>
            <person name="Rabbinowitsch E."/>
            <person name="Rutherford K.M."/>
            <person name="Rutter S."/>
            <person name="Saunders D."/>
            <person name="Seeger K."/>
            <person name="Sharp S."/>
            <person name="Skelton J."/>
            <person name="Simmonds M.N."/>
            <person name="Squares R."/>
            <person name="Squares S."/>
            <person name="Stevens K."/>
            <person name="Taylor K."/>
            <person name="Taylor R.G."/>
            <person name="Tivey A."/>
            <person name="Walsh S.V."/>
            <person name="Warren T."/>
            <person name="Whitehead S."/>
            <person name="Woodward J.R."/>
            <person name="Volckaert G."/>
            <person name="Aert R."/>
            <person name="Robben J."/>
            <person name="Grymonprez B."/>
            <person name="Weltjens I."/>
            <person name="Vanstreels E."/>
            <person name="Rieger M."/>
            <person name="Schaefer M."/>
            <person name="Mueller-Auer S."/>
            <person name="Gabel C."/>
            <person name="Fuchs M."/>
            <person name="Duesterhoeft A."/>
            <person name="Fritzc C."/>
            <person name="Holzer E."/>
            <person name="Moestl D."/>
            <person name="Hilbert H."/>
            <person name="Borzym K."/>
            <person name="Langer I."/>
            <person name="Beck A."/>
            <person name="Lehrach H."/>
            <person name="Reinhardt R."/>
            <person name="Pohl T.M."/>
            <person name="Eger P."/>
            <person name="Zimmermann W."/>
            <person name="Wedler H."/>
            <person name="Wambutt R."/>
            <person name="Purnelle B."/>
            <person name="Goffeau A."/>
            <person name="Cadieu E."/>
            <person name="Dreano S."/>
            <person name="Gloux S."/>
            <person name="Lelaure V."/>
            <person name="Mottier S."/>
            <person name="Galibert F."/>
            <person name="Aves S.J."/>
            <person name="Xiang Z."/>
            <person name="Hunt C."/>
            <person name="Moore K."/>
            <person name="Hurst S.M."/>
            <person name="Lucas M."/>
            <person name="Rochet M."/>
            <person name="Gaillardin C."/>
            <person name="Tallada V.A."/>
            <person name="Garzon A."/>
            <person name="Thode G."/>
            <person name="Daga R.R."/>
            <person name="Cruzado L."/>
            <person name="Jimenez J."/>
            <person name="Sanchez M."/>
            <person name="del Rey F."/>
            <person name="Benito J."/>
            <person name="Dominguez A."/>
            <person name="Revuelta J.L."/>
            <person name="Moreno S."/>
            <person name="Armstrong J."/>
            <person name="Forsburg S.L."/>
            <person name="Cerutti L."/>
            <person name="Lowe T."/>
            <person name="McCombie W.R."/>
            <person name="Paulsen I."/>
            <person name="Potashkin J."/>
            <person name="Shpakovski G.V."/>
            <person name="Ussery D."/>
            <person name="Barrell B.G."/>
            <person name="Nurse P."/>
        </authorList>
    </citation>
    <scope>NUCLEOTIDE SEQUENCE [LARGE SCALE GENOMIC DNA]</scope>
    <source>
        <strain>972 / ATCC 24843</strain>
    </source>
</reference>
<reference key="2">
    <citation type="journal article" date="2006" name="Nat. Biotechnol.">
        <title>ORFeome cloning and global analysis of protein localization in the fission yeast Schizosaccharomyces pombe.</title>
        <authorList>
            <person name="Matsuyama A."/>
            <person name="Arai R."/>
            <person name="Yashiroda Y."/>
            <person name="Shirai A."/>
            <person name="Kamata A."/>
            <person name="Sekido S."/>
            <person name="Kobayashi Y."/>
            <person name="Hashimoto A."/>
            <person name="Hamamoto M."/>
            <person name="Hiraoka Y."/>
            <person name="Horinouchi S."/>
            <person name="Yoshida M."/>
        </authorList>
    </citation>
    <scope>SUBCELLULAR LOCATION [LARGE SCALE ANALYSIS]</scope>
</reference>
<name>STT4_SCHPO</name>